<keyword id="KW-0963">Cytoplasm</keyword>
<keyword id="KW-0378">Hydrolase</keyword>
<keyword id="KW-0540">Nuclease</keyword>
<keyword id="KW-1185">Reference proteome</keyword>
<keyword id="KW-0690">Ribosome biogenesis</keyword>
<dbReference type="EC" id="3.1.-.-" evidence="1"/>
<dbReference type="EMBL" id="CP000411">
    <property type="protein sequence ID" value="ABJ57061.1"/>
    <property type="molecule type" value="Genomic_DNA"/>
</dbReference>
<dbReference type="SMR" id="Q04ER1"/>
<dbReference type="STRING" id="203123.OEOE_1165"/>
<dbReference type="KEGG" id="ooe:OEOE_1165"/>
<dbReference type="eggNOG" id="COG0816">
    <property type="taxonomic scope" value="Bacteria"/>
</dbReference>
<dbReference type="HOGENOM" id="CLU_098240_2_0_9"/>
<dbReference type="Proteomes" id="UP000000774">
    <property type="component" value="Chromosome"/>
</dbReference>
<dbReference type="GO" id="GO:0005829">
    <property type="term" value="C:cytosol"/>
    <property type="evidence" value="ECO:0007669"/>
    <property type="project" value="TreeGrafter"/>
</dbReference>
<dbReference type="GO" id="GO:0004518">
    <property type="term" value="F:nuclease activity"/>
    <property type="evidence" value="ECO:0007669"/>
    <property type="project" value="UniProtKB-KW"/>
</dbReference>
<dbReference type="GO" id="GO:0000967">
    <property type="term" value="P:rRNA 5'-end processing"/>
    <property type="evidence" value="ECO:0007669"/>
    <property type="project" value="UniProtKB-UniRule"/>
</dbReference>
<dbReference type="CDD" id="cd16964">
    <property type="entry name" value="YqgF"/>
    <property type="match status" value="1"/>
</dbReference>
<dbReference type="Gene3D" id="3.30.420.140">
    <property type="entry name" value="YqgF/RNase H-like domain"/>
    <property type="match status" value="1"/>
</dbReference>
<dbReference type="HAMAP" id="MF_00651">
    <property type="entry name" value="Nuclease_YqgF"/>
    <property type="match status" value="1"/>
</dbReference>
<dbReference type="InterPro" id="IPR012337">
    <property type="entry name" value="RNaseH-like_sf"/>
</dbReference>
<dbReference type="InterPro" id="IPR005227">
    <property type="entry name" value="YqgF"/>
</dbReference>
<dbReference type="InterPro" id="IPR006641">
    <property type="entry name" value="YqgF/RNaseH-like_dom"/>
</dbReference>
<dbReference type="InterPro" id="IPR037027">
    <property type="entry name" value="YqgF/RNaseH-like_dom_sf"/>
</dbReference>
<dbReference type="NCBIfam" id="TIGR00250">
    <property type="entry name" value="RNAse_H_YqgF"/>
    <property type="match status" value="1"/>
</dbReference>
<dbReference type="PANTHER" id="PTHR33317">
    <property type="entry name" value="POLYNUCLEOTIDYL TRANSFERASE, RIBONUCLEASE H-LIKE SUPERFAMILY PROTEIN"/>
    <property type="match status" value="1"/>
</dbReference>
<dbReference type="PANTHER" id="PTHR33317:SF4">
    <property type="entry name" value="POLYNUCLEOTIDYL TRANSFERASE, RIBONUCLEASE H-LIKE SUPERFAMILY PROTEIN"/>
    <property type="match status" value="1"/>
</dbReference>
<dbReference type="Pfam" id="PF03652">
    <property type="entry name" value="RuvX"/>
    <property type="match status" value="1"/>
</dbReference>
<dbReference type="SMART" id="SM00732">
    <property type="entry name" value="YqgFc"/>
    <property type="match status" value="1"/>
</dbReference>
<dbReference type="SUPFAM" id="SSF53098">
    <property type="entry name" value="Ribonuclease H-like"/>
    <property type="match status" value="1"/>
</dbReference>
<organism>
    <name type="scientific">Oenococcus oeni (strain ATCC BAA-331 / PSU-1)</name>
    <dbReference type="NCBI Taxonomy" id="203123"/>
    <lineage>
        <taxon>Bacteria</taxon>
        <taxon>Bacillati</taxon>
        <taxon>Bacillota</taxon>
        <taxon>Bacilli</taxon>
        <taxon>Lactobacillales</taxon>
        <taxon>Lactobacillaceae</taxon>
        <taxon>Oenococcus</taxon>
    </lineage>
</organism>
<evidence type="ECO:0000255" key="1">
    <source>
        <dbReference type="HAMAP-Rule" id="MF_00651"/>
    </source>
</evidence>
<reference key="1">
    <citation type="journal article" date="2006" name="Proc. Natl. Acad. Sci. U.S.A.">
        <title>Comparative genomics of the lactic acid bacteria.</title>
        <authorList>
            <person name="Makarova K.S."/>
            <person name="Slesarev A."/>
            <person name="Wolf Y.I."/>
            <person name="Sorokin A."/>
            <person name="Mirkin B."/>
            <person name="Koonin E.V."/>
            <person name="Pavlov A."/>
            <person name="Pavlova N."/>
            <person name="Karamychev V."/>
            <person name="Polouchine N."/>
            <person name="Shakhova V."/>
            <person name="Grigoriev I."/>
            <person name="Lou Y."/>
            <person name="Rohksar D."/>
            <person name="Lucas S."/>
            <person name="Huang K."/>
            <person name="Goodstein D.M."/>
            <person name="Hawkins T."/>
            <person name="Plengvidhya V."/>
            <person name="Welker D."/>
            <person name="Hughes J."/>
            <person name="Goh Y."/>
            <person name="Benson A."/>
            <person name="Baldwin K."/>
            <person name="Lee J.-H."/>
            <person name="Diaz-Muniz I."/>
            <person name="Dosti B."/>
            <person name="Smeianov V."/>
            <person name="Wechter W."/>
            <person name="Barabote R."/>
            <person name="Lorca G."/>
            <person name="Altermann E."/>
            <person name="Barrangou R."/>
            <person name="Ganesan B."/>
            <person name="Xie Y."/>
            <person name="Rawsthorne H."/>
            <person name="Tamir D."/>
            <person name="Parker C."/>
            <person name="Breidt F."/>
            <person name="Broadbent J.R."/>
            <person name="Hutkins R."/>
            <person name="O'Sullivan D."/>
            <person name="Steele J."/>
            <person name="Unlu G."/>
            <person name="Saier M.H. Jr."/>
            <person name="Klaenhammer T."/>
            <person name="Richardson P."/>
            <person name="Kozyavkin S."/>
            <person name="Weimer B.C."/>
            <person name="Mills D.A."/>
        </authorList>
    </citation>
    <scope>NUCLEOTIDE SEQUENCE [LARGE SCALE GENOMIC DNA]</scope>
    <source>
        <strain>ATCC BAA-331 / PSU-1</strain>
    </source>
</reference>
<accession>Q04ER1</accession>
<proteinExistence type="inferred from homology"/>
<feature type="chain" id="PRO_1000061546" description="Putative pre-16S rRNA nuclease">
    <location>
        <begin position="1"/>
        <end position="144"/>
    </location>
</feature>
<sequence>MRLLGLDVGSKTVGVAQSDPLGWTASSIEIIRINEAQGEFGLDRLGQIISEKKVSGIVIGLPKNMNNTEGPRVEASRNYGKMVSERFGLPIDYQDERLTSVEANRMLIEEADLSRAKRKKVIDSLAAQLILQNYLDKKGRLTNG</sequence>
<name>YQGF_OENOB</name>
<gene>
    <name type="ordered locus">OEOE_1165</name>
</gene>
<protein>
    <recommendedName>
        <fullName evidence="1">Putative pre-16S rRNA nuclease</fullName>
        <ecNumber evidence="1">3.1.-.-</ecNumber>
    </recommendedName>
</protein>
<comment type="function">
    <text evidence="1">Could be a nuclease involved in processing of the 5'-end of pre-16S rRNA.</text>
</comment>
<comment type="subcellular location">
    <subcellularLocation>
        <location evidence="1">Cytoplasm</location>
    </subcellularLocation>
</comment>
<comment type="similarity">
    <text evidence="1">Belongs to the YqgF nuclease family.</text>
</comment>